<sequence length="296" mass="30519">MSILIDEKTPILVQGITGDKGTFHAKEMIAYGSNVVGGVTPGKGGKTHCGVPVFNTVKEAVEATGATTSITFVAPPFAADAIMEAADAGLKLVCSITDGIPAQDMMRVKRYLRRYPKEKRTMVVGPNCAGIISPGKSMLGIMPGHIYLPGKVGVISRSGTLGYEAAAQMKELGIGISTSVGIGGDPINGSSFLDHLALFEQDPETEAVLMIGEIGGPQEAEASAWIKENFSKPVIGFVAGLTAPKGRRMGHAGAIISATGDSAAEKAEIMRSYGLTVAPDPGSFGSTVADVLARAA</sequence>
<name>MTKB_METEA</name>
<evidence type="ECO:0000255" key="1">
    <source>
        <dbReference type="HAMAP-Rule" id="MF_01988"/>
    </source>
</evidence>
<evidence type="ECO:0000305" key="2"/>
<comment type="catalytic activity">
    <reaction>
        <text>(S)-malate + ATP + CoA = (S)-malyl-CoA + ADP + phosphate</text>
        <dbReference type="Rhea" id="RHEA:26193"/>
        <dbReference type="ChEBI" id="CHEBI:15589"/>
        <dbReference type="ChEBI" id="CHEBI:30616"/>
        <dbReference type="ChEBI" id="CHEBI:43474"/>
        <dbReference type="ChEBI" id="CHEBI:57287"/>
        <dbReference type="ChEBI" id="CHEBI:57317"/>
        <dbReference type="ChEBI" id="CHEBI:456216"/>
        <dbReference type="EC" id="6.2.1.9"/>
    </reaction>
</comment>
<comment type="pathway">
    <text>One-carbon metabolism; formaldehyde assimilation via serine pathway.</text>
</comment>
<comment type="subunit">
    <text evidence="1">Heterotetramer of two alpha and two beta subunits.</text>
</comment>
<comment type="similarity">
    <text evidence="1">Belongs to the succinate/malate CoA ligase alpha subunit family.</text>
</comment>
<proteinExistence type="inferred from homology"/>
<accession>P53595</accession>
<accession>C5B111</accession>
<gene>
    <name type="primary">mtkB</name>
    <name type="ordered locus">MexAM1_META1p1731</name>
</gene>
<dbReference type="EC" id="6.2.1.9"/>
<dbReference type="EMBL" id="L33465">
    <property type="protein sequence ID" value="AAA62655.1"/>
    <property type="molecule type" value="Genomic_DNA"/>
</dbReference>
<dbReference type="EMBL" id="CP001510">
    <property type="protein sequence ID" value="ACS39575.1"/>
    <property type="molecule type" value="Genomic_DNA"/>
</dbReference>
<dbReference type="PIR" id="C55230">
    <property type="entry name" value="C55230"/>
</dbReference>
<dbReference type="SMR" id="P53595"/>
<dbReference type="STRING" id="272630.MexAM1_META1p1731"/>
<dbReference type="KEGG" id="mea:Mex_1p1731"/>
<dbReference type="eggNOG" id="COG0074">
    <property type="taxonomic scope" value="Bacteria"/>
</dbReference>
<dbReference type="HOGENOM" id="CLU_052104_0_0_5"/>
<dbReference type="OrthoDB" id="9807196at2"/>
<dbReference type="BioCyc" id="MetaCyc:MONOMER-4227"/>
<dbReference type="UniPathway" id="UPA00927"/>
<dbReference type="Proteomes" id="UP000009081">
    <property type="component" value="Chromosome"/>
</dbReference>
<dbReference type="GO" id="GO:0009361">
    <property type="term" value="C:succinate-CoA ligase complex (ADP-forming)"/>
    <property type="evidence" value="ECO:0007669"/>
    <property type="project" value="TreeGrafter"/>
</dbReference>
<dbReference type="GO" id="GO:0050074">
    <property type="term" value="F:malate-CoA ligase activity"/>
    <property type="evidence" value="ECO:0007669"/>
    <property type="project" value="UniProtKB-EC"/>
</dbReference>
<dbReference type="GO" id="GO:0000166">
    <property type="term" value="F:nucleotide binding"/>
    <property type="evidence" value="ECO:0007669"/>
    <property type="project" value="UniProtKB-KW"/>
</dbReference>
<dbReference type="GO" id="GO:0004775">
    <property type="term" value="F:succinate-CoA ligase (ADP-forming) activity"/>
    <property type="evidence" value="ECO:0007669"/>
    <property type="project" value="UniProtKB-UniRule"/>
</dbReference>
<dbReference type="GO" id="GO:0004776">
    <property type="term" value="F:succinate-CoA ligase (GDP-forming) activity"/>
    <property type="evidence" value="ECO:0007669"/>
    <property type="project" value="TreeGrafter"/>
</dbReference>
<dbReference type="GO" id="GO:0006099">
    <property type="term" value="P:tricarboxylic acid cycle"/>
    <property type="evidence" value="ECO:0007669"/>
    <property type="project" value="UniProtKB-UniRule"/>
</dbReference>
<dbReference type="FunFam" id="3.40.50.261:FF:000006">
    <property type="entry name" value="Succinate--CoA ligase [ADP-forming] subunit alpha"/>
    <property type="match status" value="1"/>
</dbReference>
<dbReference type="FunFam" id="3.40.50.720:FF:000277">
    <property type="entry name" value="Succinate--CoA ligase [ADP-forming] subunit alpha"/>
    <property type="match status" value="1"/>
</dbReference>
<dbReference type="Gene3D" id="3.40.50.720">
    <property type="entry name" value="NAD(P)-binding Rossmann-like Domain"/>
    <property type="match status" value="1"/>
</dbReference>
<dbReference type="Gene3D" id="3.40.50.261">
    <property type="entry name" value="Succinyl-CoA synthetase domains"/>
    <property type="match status" value="1"/>
</dbReference>
<dbReference type="HAMAP" id="MF_01988">
    <property type="entry name" value="Succ_CoA_alpha"/>
    <property type="match status" value="1"/>
</dbReference>
<dbReference type="InterPro" id="IPR017440">
    <property type="entry name" value="Cit_synth/succinyl-CoA_lig_AS"/>
</dbReference>
<dbReference type="InterPro" id="IPR033847">
    <property type="entry name" value="Citrt_syn/SCS-alpha_CS"/>
</dbReference>
<dbReference type="InterPro" id="IPR003781">
    <property type="entry name" value="CoA-bd"/>
</dbReference>
<dbReference type="InterPro" id="IPR005810">
    <property type="entry name" value="CoA_lig_alpha"/>
</dbReference>
<dbReference type="InterPro" id="IPR036291">
    <property type="entry name" value="NAD(P)-bd_dom_sf"/>
</dbReference>
<dbReference type="InterPro" id="IPR005811">
    <property type="entry name" value="SUCC_ACL_C"/>
</dbReference>
<dbReference type="InterPro" id="IPR016102">
    <property type="entry name" value="Succinyl-CoA_synth-like"/>
</dbReference>
<dbReference type="NCBIfam" id="NF004230">
    <property type="entry name" value="PRK05678.1"/>
    <property type="match status" value="1"/>
</dbReference>
<dbReference type="NCBIfam" id="TIGR01019">
    <property type="entry name" value="sucCoAalpha"/>
    <property type="match status" value="1"/>
</dbReference>
<dbReference type="PANTHER" id="PTHR11117:SF2">
    <property type="entry name" value="SUCCINATE--COA LIGASE [ADP_GDP-FORMING] SUBUNIT ALPHA, MITOCHONDRIAL"/>
    <property type="match status" value="1"/>
</dbReference>
<dbReference type="PANTHER" id="PTHR11117">
    <property type="entry name" value="SUCCINYL-COA LIGASE SUBUNIT ALPHA"/>
    <property type="match status" value="1"/>
</dbReference>
<dbReference type="Pfam" id="PF02629">
    <property type="entry name" value="CoA_binding"/>
    <property type="match status" value="1"/>
</dbReference>
<dbReference type="Pfam" id="PF00549">
    <property type="entry name" value="Ligase_CoA"/>
    <property type="match status" value="1"/>
</dbReference>
<dbReference type="PIRSF" id="PIRSF001553">
    <property type="entry name" value="SucCS_alpha"/>
    <property type="match status" value="1"/>
</dbReference>
<dbReference type="PRINTS" id="PR01798">
    <property type="entry name" value="SCOASYNTHASE"/>
</dbReference>
<dbReference type="SMART" id="SM00881">
    <property type="entry name" value="CoA_binding"/>
    <property type="match status" value="1"/>
</dbReference>
<dbReference type="SUPFAM" id="SSF51735">
    <property type="entry name" value="NAD(P)-binding Rossmann-fold domains"/>
    <property type="match status" value="1"/>
</dbReference>
<dbReference type="SUPFAM" id="SSF52210">
    <property type="entry name" value="Succinyl-CoA synthetase domains"/>
    <property type="match status" value="1"/>
</dbReference>
<dbReference type="PROSITE" id="PS01216">
    <property type="entry name" value="SUCCINYL_COA_LIG_1"/>
    <property type="match status" value="1"/>
</dbReference>
<dbReference type="PROSITE" id="PS00399">
    <property type="entry name" value="SUCCINYL_COA_LIG_2"/>
    <property type="match status" value="1"/>
</dbReference>
<feature type="chain" id="PRO_0000102812" description="Malate--CoA ligase subunit alpha">
    <location>
        <begin position="1"/>
        <end position="296"/>
    </location>
</feature>
<feature type="active site" description="Tele-phosphohistidine intermediate" evidence="1">
    <location>
        <position position="251"/>
    </location>
</feature>
<feature type="binding site" evidence="1">
    <location>
        <begin position="17"/>
        <end position="20"/>
    </location>
    <ligand>
        <name>CoA</name>
        <dbReference type="ChEBI" id="CHEBI:57287"/>
    </ligand>
</feature>
<feature type="binding site" evidence="1">
    <location>
        <position position="43"/>
    </location>
    <ligand>
        <name>CoA</name>
        <dbReference type="ChEBI" id="CHEBI:57287"/>
    </ligand>
</feature>
<feature type="binding site" evidence="1">
    <location>
        <begin position="96"/>
        <end position="98"/>
    </location>
    <ligand>
        <name>CoA</name>
        <dbReference type="ChEBI" id="CHEBI:57287"/>
    </ligand>
</feature>
<feature type="sequence conflict" description="In Ref. 1; AAA62655." evidence="2" ref="1">
    <original>GAIISATGDSAAEKAEIMRSYGLTVAPDPGSFGSTVADVLARAA</original>
    <variation>HHGFGSG</variation>
    <location>
        <begin position="253"/>
        <end position="296"/>
    </location>
</feature>
<reference key="1">
    <citation type="journal article" date="1994" name="J. Bacteriol.">
        <title>Genetics of the serine cycle in Methylobacterium extorquens AM1: identification, sequence, and mutation of three new genes involved in C1 assimilation, orf4, mtkA, and mtkB.</title>
        <authorList>
            <person name="Chistoserdova L.V."/>
            <person name="Lidstrom M.E."/>
        </authorList>
    </citation>
    <scope>NUCLEOTIDE SEQUENCE [GENOMIC DNA]</scope>
</reference>
<reference key="2">
    <citation type="journal article" date="2009" name="PLoS ONE">
        <title>Methylobacterium genome sequences: a reference blueprint to investigate microbial metabolism of C1 compounds from natural and industrial sources.</title>
        <authorList>
            <person name="Vuilleumier S."/>
            <person name="Chistoserdova L."/>
            <person name="Lee M.-C."/>
            <person name="Bringel F."/>
            <person name="Lajus A."/>
            <person name="Zhou Y."/>
            <person name="Gourion B."/>
            <person name="Barbe V."/>
            <person name="Chang J."/>
            <person name="Cruveiller S."/>
            <person name="Dossat C."/>
            <person name="Gillett W."/>
            <person name="Gruffaz C."/>
            <person name="Haugen E."/>
            <person name="Hourcade E."/>
            <person name="Levy R."/>
            <person name="Mangenot S."/>
            <person name="Muller E."/>
            <person name="Nadalig T."/>
            <person name="Pagni M."/>
            <person name="Penny C."/>
            <person name="Peyraud R."/>
            <person name="Robinson D.G."/>
            <person name="Roche D."/>
            <person name="Rouy Z."/>
            <person name="Saenampechek C."/>
            <person name="Salvignol G."/>
            <person name="Vallenet D."/>
            <person name="Wu Z."/>
            <person name="Marx C.J."/>
            <person name="Vorholt J.A."/>
            <person name="Olson M.V."/>
            <person name="Kaul R."/>
            <person name="Weissenbach J."/>
            <person name="Medigue C."/>
            <person name="Lidstrom M.E."/>
        </authorList>
    </citation>
    <scope>NUCLEOTIDE SEQUENCE [LARGE SCALE GENOMIC DNA]</scope>
    <source>
        <strain>ATCC 14718 / DSM 1338 / JCM 2805 / NCIMB 9133 / AM1</strain>
    </source>
</reference>
<organism>
    <name type="scientific">Methylorubrum extorquens (strain ATCC 14718 / DSM 1338 / JCM 2805 / NCIMB 9133 / AM1)</name>
    <name type="common">Methylobacterium extorquens</name>
    <dbReference type="NCBI Taxonomy" id="272630"/>
    <lineage>
        <taxon>Bacteria</taxon>
        <taxon>Pseudomonadati</taxon>
        <taxon>Pseudomonadota</taxon>
        <taxon>Alphaproteobacteria</taxon>
        <taxon>Hyphomicrobiales</taxon>
        <taxon>Methylobacteriaceae</taxon>
        <taxon>Methylorubrum</taxon>
    </lineage>
</organism>
<keyword id="KW-0436">Ligase</keyword>
<keyword id="KW-0547">Nucleotide-binding</keyword>
<keyword id="KW-1185">Reference proteome</keyword>
<keyword id="KW-0816">Tricarboxylic acid cycle</keyword>
<protein>
    <recommendedName>
        <fullName>Malate--CoA ligase subunit alpha</fullName>
        <ecNumber>6.2.1.9</ecNumber>
    </recommendedName>
    <alternativeName>
        <fullName>MTK-alpha</fullName>
    </alternativeName>
    <alternativeName>
        <fullName>Malate thiokinase</fullName>
    </alternativeName>
    <alternativeName>
        <fullName>Malyl-CoA synthetase</fullName>
    </alternativeName>
</protein>